<sequence length="235" mass="27033">MSKQLIYSGKAKDIYTTEDENLIISTYKDQATAFNGVKKEQIAGKGVLNNQISSFIFEKLNAAGVATHFVEKLSDTEQLNKKVKIIPLEVVLRNYTAGSFSKRFGVDEGIALETPIVEFYYKNDDLDDPFINDEHVKFLQIADDQQIAYLKEETRRINELLKVWFAEIGLKLIDFKLEFGFDKDGKIILADEFSPDNCRLWDADGNHMDKDVFRRGLGELTDVYEIVWEKLQELK</sequence>
<proteinExistence type="inferred from homology"/>
<reference key="1">
    <citation type="journal article" date="2010" name="Genome Biol.">
        <title>Structure and dynamics of the pan-genome of Streptococcus pneumoniae and closely related species.</title>
        <authorList>
            <person name="Donati C."/>
            <person name="Hiller N.L."/>
            <person name="Tettelin H."/>
            <person name="Muzzi A."/>
            <person name="Croucher N.J."/>
            <person name="Angiuoli S.V."/>
            <person name="Oggioni M."/>
            <person name="Dunning Hotopp J.C."/>
            <person name="Hu F.Z."/>
            <person name="Riley D.R."/>
            <person name="Covacci A."/>
            <person name="Mitchell T.J."/>
            <person name="Bentley S.D."/>
            <person name="Kilian M."/>
            <person name="Ehrlich G.D."/>
            <person name="Rappuoli R."/>
            <person name="Moxon E.R."/>
            <person name="Masignani V."/>
        </authorList>
    </citation>
    <scope>NUCLEOTIDE SEQUENCE [LARGE SCALE GENOMIC DNA]</scope>
    <source>
        <strain>JJA</strain>
    </source>
</reference>
<comment type="catalytic activity">
    <reaction evidence="1">
        <text>5-amino-1-(5-phospho-D-ribosyl)imidazole-4-carboxylate + L-aspartate + ATP = (2S)-2-[5-amino-1-(5-phospho-beta-D-ribosyl)imidazole-4-carboxamido]succinate + ADP + phosphate + 2 H(+)</text>
        <dbReference type="Rhea" id="RHEA:22628"/>
        <dbReference type="ChEBI" id="CHEBI:15378"/>
        <dbReference type="ChEBI" id="CHEBI:29991"/>
        <dbReference type="ChEBI" id="CHEBI:30616"/>
        <dbReference type="ChEBI" id="CHEBI:43474"/>
        <dbReference type="ChEBI" id="CHEBI:58443"/>
        <dbReference type="ChEBI" id="CHEBI:77657"/>
        <dbReference type="ChEBI" id="CHEBI:456216"/>
        <dbReference type="EC" id="6.3.2.6"/>
    </reaction>
</comment>
<comment type="pathway">
    <text evidence="1">Purine metabolism; IMP biosynthesis via de novo pathway; 5-amino-1-(5-phospho-D-ribosyl)imidazole-4-carboxamide from 5-amino-1-(5-phospho-D-ribosyl)imidazole-4-carboxylate: step 1/2.</text>
</comment>
<comment type="similarity">
    <text evidence="1">Belongs to the SAICAR synthetase family.</text>
</comment>
<evidence type="ECO:0000255" key="1">
    <source>
        <dbReference type="HAMAP-Rule" id="MF_00137"/>
    </source>
</evidence>
<dbReference type="EC" id="6.3.2.6" evidence="1"/>
<dbReference type="EMBL" id="CP000919">
    <property type="protein sequence ID" value="ACO20123.1"/>
    <property type="molecule type" value="Genomic_DNA"/>
</dbReference>
<dbReference type="RefSeq" id="WP_000043300.1">
    <property type="nucleotide sequence ID" value="NC_012466.1"/>
</dbReference>
<dbReference type="SMR" id="C1CBM0"/>
<dbReference type="GeneID" id="45652446"/>
<dbReference type="KEGG" id="sjj:SPJ_0075"/>
<dbReference type="HOGENOM" id="CLU_061495_2_0_9"/>
<dbReference type="UniPathway" id="UPA00074">
    <property type="reaction ID" value="UER00131"/>
</dbReference>
<dbReference type="Proteomes" id="UP000002206">
    <property type="component" value="Chromosome"/>
</dbReference>
<dbReference type="GO" id="GO:0005524">
    <property type="term" value="F:ATP binding"/>
    <property type="evidence" value="ECO:0007669"/>
    <property type="project" value="UniProtKB-KW"/>
</dbReference>
<dbReference type="GO" id="GO:0004639">
    <property type="term" value="F:phosphoribosylaminoimidazolesuccinocarboxamide synthase activity"/>
    <property type="evidence" value="ECO:0007669"/>
    <property type="project" value="UniProtKB-UniRule"/>
</dbReference>
<dbReference type="GO" id="GO:0006189">
    <property type="term" value="P:'de novo' IMP biosynthetic process"/>
    <property type="evidence" value="ECO:0007669"/>
    <property type="project" value="UniProtKB-UniRule"/>
</dbReference>
<dbReference type="GO" id="GO:0009236">
    <property type="term" value="P:cobalamin biosynthetic process"/>
    <property type="evidence" value="ECO:0007669"/>
    <property type="project" value="InterPro"/>
</dbReference>
<dbReference type="CDD" id="cd01415">
    <property type="entry name" value="SAICAR_synt_PurC"/>
    <property type="match status" value="1"/>
</dbReference>
<dbReference type="FunFam" id="3.30.200.20:FF:000189">
    <property type="entry name" value="Phosphoribosylaminoimidazole-succinocarboxamide synthase"/>
    <property type="match status" value="1"/>
</dbReference>
<dbReference type="FunFam" id="3.30.470.20:FF:000006">
    <property type="entry name" value="Phosphoribosylaminoimidazole-succinocarboxamide synthase"/>
    <property type="match status" value="1"/>
</dbReference>
<dbReference type="Gene3D" id="3.30.470.20">
    <property type="entry name" value="ATP-grasp fold, B domain"/>
    <property type="match status" value="1"/>
</dbReference>
<dbReference type="Gene3D" id="3.30.200.20">
    <property type="entry name" value="Phosphorylase Kinase, domain 1"/>
    <property type="match status" value="1"/>
</dbReference>
<dbReference type="HAMAP" id="MF_00137">
    <property type="entry name" value="SAICAR_synth"/>
    <property type="match status" value="1"/>
</dbReference>
<dbReference type="InterPro" id="IPR028923">
    <property type="entry name" value="SAICAR_synt/ADE2_N"/>
</dbReference>
<dbReference type="InterPro" id="IPR033934">
    <property type="entry name" value="SAICAR_synt_PurC"/>
</dbReference>
<dbReference type="InterPro" id="IPR001636">
    <property type="entry name" value="SAICAR_synth"/>
</dbReference>
<dbReference type="InterPro" id="IPR050089">
    <property type="entry name" value="SAICAR_synthetase"/>
</dbReference>
<dbReference type="InterPro" id="IPR018236">
    <property type="entry name" value="SAICAR_synthetase_CS"/>
</dbReference>
<dbReference type="NCBIfam" id="TIGR00081">
    <property type="entry name" value="purC"/>
    <property type="match status" value="1"/>
</dbReference>
<dbReference type="PANTHER" id="PTHR43599">
    <property type="entry name" value="MULTIFUNCTIONAL PROTEIN ADE2"/>
    <property type="match status" value="1"/>
</dbReference>
<dbReference type="PANTHER" id="PTHR43599:SF3">
    <property type="entry name" value="SI:DKEY-6E2.2"/>
    <property type="match status" value="1"/>
</dbReference>
<dbReference type="Pfam" id="PF01259">
    <property type="entry name" value="SAICAR_synt"/>
    <property type="match status" value="1"/>
</dbReference>
<dbReference type="SUPFAM" id="SSF56104">
    <property type="entry name" value="SAICAR synthase-like"/>
    <property type="match status" value="1"/>
</dbReference>
<dbReference type="PROSITE" id="PS01057">
    <property type="entry name" value="SAICAR_SYNTHETASE_1"/>
    <property type="match status" value="1"/>
</dbReference>
<dbReference type="PROSITE" id="PS01058">
    <property type="entry name" value="SAICAR_SYNTHETASE_2"/>
    <property type="match status" value="1"/>
</dbReference>
<keyword id="KW-0067">ATP-binding</keyword>
<keyword id="KW-0436">Ligase</keyword>
<keyword id="KW-0547">Nucleotide-binding</keyword>
<keyword id="KW-0658">Purine biosynthesis</keyword>
<protein>
    <recommendedName>
        <fullName evidence="1">Phosphoribosylaminoimidazole-succinocarboxamide synthase</fullName>
        <ecNumber evidence="1">6.3.2.6</ecNumber>
    </recommendedName>
    <alternativeName>
        <fullName evidence="1">SAICAR synthetase</fullName>
    </alternativeName>
</protein>
<gene>
    <name evidence="1" type="primary">purC</name>
    <name type="ordered locus">SPJ_0075</name>
</gene>
<accession>C1CBM0</accession>
<feature type="chain" id="PRO_1000122935" description="Phosphoribosylaminoimidazole-succinocarboxamide synthase">
    <location>
        <begin position="1"/>
        <end position="235"/>
    </location>
</feature>
<name>PUR7_STRZJ</name>
<organism>
    <name type="scientific">Streptococcus pneumoniae (strain JJA)</name>
    <dbReference type="NCBI Taxonomy" id="488222"/>
    <lineage>
        <taxon>Bacteria</taxon>
        <taxon>Bacillati</taxon>
        <taxon>Bacillota</taxon>
        <taxon>Bacilli</taxon>
        <taxon>Lactobacillales</taxon>
        <taxon>Streptococcaceae</taxon>
        <taxon>Streptococcus</taxon>
    </lineage>
</organism>